<evidence type="ECO:0000250" key="1">
    <source>
        <dbReference type="UniProtKB" id="P02883"/>
    </source>
</evidence>
<evidence type="ECO:0000255" key="2">
    <source>
        <dbReference type="PROSITE-ProRule" id="PRU00699"/>
    </source>
</evidence>
<evidence type="ECO:0000269" key="3">
    <source>
    </source>
</evidence>
<evidence type="ECO:0000305" key="4"/>
<evidence type="ECO:0000305" key="5">
    <source>
    </source>
</evidence>
<evidence type="ECO:0000312" key="6">
    <source>
        <dbReference type="EMBL" id="BAA28872.1"/>
    </source>
</evidence>
<accession>O80327</accession>
<keyword id="KW-0903">Direct protein sequencing</keyword>
<keyword id="KW-1015">Disulfide bond</keyword>
<keyword id="KW-0325">Glycoprotein</keyword>
<keyword id="KW-0964">Secreted</keyword>
<keyword id="KW-0732">Signal</keyword>
<proteinExistence type="evidence at protein level"/>
<organism evidence="6">
    <name type="scientific">Pyrus pyrifolia</name>
    <name type="common">Chinese pear</name>
    <name type="synonym">Pyrus serotina</name>
    <dbReference type="NCBI Taxonomy" id="3767"/>
    <lineage>
        <taxon>Eukaryota</taxon>
        <taxon>Viridiplantae</taxon>
        <taxon>Streptophyta</taxon>
        <taxon>Embryophyta</taxon>
        <taxon>Tracheophyta</taxon>
        <taxon>Spermatophyta</taxon>
        <taxon>Magnoliopsida</taxon>
        <taxon>eudicotyledons</taxon>
        <taxon>Gunneridae</taxon>
        <taxon>Pentapetalae</taxon>
        <taxon>rosids</taxon>
        <taxon>fabids</taxon>
        <taxon>Rosales</taxon>
        <taxon>Rosaceae</taxon>
        <taxon>Amygdaloideae</taxon>
        <taxon>Maleae</taxon>
        <taxon>Pyrus</taxon>
    </lineage>
</organism>
<reference evidence="4" key="1">
    <citation type="journal article" date="1998" name="Planta">
        <title>Style-specific and developmentally regulated accumulation of a glycosylated thaumatin/PR5-like protein in Japanese pear (Pyrus serotina Rehd.).</title>
        <authorList>
            <person name="Sassa H."/>
            <person name="Hirano H."/>
        </authorList>
    </citation>
    <scope>NUCLEOTIDE SEQUENCE [MRNA]</scope>
    <scope>PROTEIN SEQUENCE OF 23-32</scope>
    <scope>DEVELOPMENTAL STAGE</scope>
    <scope>TISSUE SPECIFICITY</scope>
    <scope>GLYCOSYLATION</scope>
    <source>
        <strain>cv. Hosui</strain>
        <tissue>Style</tissue>
    </source>
</reference>
<protein>
    <recommendedName>
        <fullName>Thaumatin-like protein 1</fullName>
    </recommendedName>
</protein>
<name>TLP1_PYRPY</name>
<sequence length="244" mass="25308">MKFEALIGLVLVFLSEHAGVYSAKFTFTNKCPNTVWPGTLTGGGGPQLLSTGFELASGASTSLTVQAPWSGRFWGRSHCSIDSSGKFKCSTGDCGSGQISCNGAGASPPASLVELTLATNGGQDFYDVSLVDGFNLPIKLAPRGGSGDCNSTSCAANINTVCPAELSDKGSDGSVIGCKSACLALNQPQYCCTGAYGTPDTCPPTDFSKVFKNQCPQAYSYAYDDKSSTFTCFGGPNYEITFCP</sequence>
<gene>
    <name type="primary">TL1</name>
</gene>
<dbReference type="EMBL" id="AB006009">
    <property type="protein sequence ID" value="BAA28872.1"/>
    <property type="molecule type" value="mRNA"/>
</dbReference>
<dbReference type="SMR" id="O80327"/>
<dbReference type="GlyCosmos" id="O80327">
    <property type="glycosylation" value="1 site, No reported glycans"/>
</dbReference>
<dbReference type="iPTMnet" id="O80327"/>
<dbReference type="GO" id="GO:0005576">
    <property type="term" value="C:extracellular region"/>
    <property type="evidence" value="ECO:0007669"/>
    <property type="project" value="UniProtKB-SubCell"/>
</dbReference>
<dbReference type="CDD" id="cd09218">
    <property type="entry name" value="TLP-PA"/>
    <property type="match status" value="1"/>
</dbReference>
<dbReference type="FunFam" id="2.60.110.10:FF:000002">
    <property type="entry name" value="Thaumatin-like protein 1a"/>
    <property type="match status" value="1"/>
</dbReference>
<dbReference type="Gene3D" id="2.60.110.10">
    <property type="entry name" value="Thaumatin"/>
    <property type="match status" value="1"/>
</dbReference>
<dbReference type="InterPro" id="IPR037176">
    <property type="entry name" value="Osmotin/thaumatin-like_sf"/>
</dbReference>
<dbReference type="InterPro" id="IPR001938">
    <property type="entry name" value="Thaumatin"/>
</dbReference>
<dbReference type="InterPro" id="IPR017949">
    <property type="entry name" value="Thaumatin_CS"/>
</dbReference>
<dbReference type="PANTHER" id="PTHR31048">
    <property type="entry name" value="OS03G0233200 PROTEIN"/>
    <property type="match status" value="1"/>
</dbReference>
<dbReference type="Pfam" id="PF00314">
    <property type="entry name" value="Thaumatin"/>
    <property type="match status" value="1"/>
</dbReference>
<dbReference type="PIRSF" id="PIRSF002703">
    <property type="entry name" value="Thaumatin"/>
    <property type="match status" value="1"/>
</dbReference>
<dbReference type="PRINTS" id="PR00347">
    <property type="entry name" value="THAUMATIN"/>
</dbReference>
<dbReference type="SMART" id="SM00205">
    <property type="entry name" value="THN"/>
    <property type="match status" value="1"/>
</dbReference>
<dbReference type="SUPFAM" id="SSF49870">
    <property type="entry name" value="Osmotin, thaumatin-like protein"/>
    <property type="match status" value="1"/>
</dbReference>
<dbReference type="PROSITE" id="PS00316">
    <property type="entry name" value="THAUMATIN_1"/>
    <property type="match status" value="1"/>
</dbReference>
<dbReference type="PROSITE" id="PS51367">
    <property type="entry name" value="THAUMATIN_2"/>
    <property type="match status" value="1"/>
</dbReference>
<feature type="signal peptide" evidence="3">
    <location>
        <begin position="1"/>
        <end position="22"/>
    </location>
</feature>
<feature type="chain" id="PRO_0000034024" description="Thaumatin-like protein 1" evidence="3">
    <location>
        <begin position="23"/>
        <end position="244"/>
    </location>
</feature>
<feature type="glycosylation site" description="N-linked (GlcNAc...) asparagine" evidence="4 5">
    <location>
        <position position="150"/>
    </location>
</feature>
<feature type="disulfide bond" evidence="1 2">
    <location>
        <begin position="31"/>
        <end position="243"/>
    </location>
</feature>
<feature type="disulfide bond" evidence="1 2">
    <location>
        <begin position="79"/>
        <end position="89"/>
    </location>
</feature>
<feature type="disulfide bond" evidence="1 2">
    <location>
        <begin position="94"/>
        <end position="101"/>
    </location>
</feature>
<feature type="disulfide bond" evidence="1 2">
    <location>
        <begin position="149"/>
        <end position="232"/>
    </location>
</feature>
<feature type="disulfide bond" evidence="1 2">
    <location>
        <begin position="154"/>
        <end position="215"/>
    </location>
</feature>
<feature type="disulfide bond" evidence="1 2">
    <location>
        <begin position="162"/>
        <end position="178"/>
    </location>
</feature>
<feature type="disulfide bond" evidence="1 2">
    <location>
        <begin position="182"/>
        <end position="191"/>
    </location>
</feature>
<feature type="disulfide bond" evidence="1 2">
    <location>
        <begin position="192"/>
        <end position="202"/>
    </location>
</feature>
<comment type="subcellular location">
    <subcellularLocation>
        <location>Secreted</location>
    </subcellularLocation>
</comment>
<comment type="tissue specificity">
    <text evidence="3">Style.</text>
</comment>
<comment type="developmental stage">
    <text evidence="3">Accumulates following maturation of flower buds.</text>
</comment>
<comment type="PTM">
    <text evidence="3">N-glycosylated.</text>
</comment>
<comment type="similarity">
    <text evidence="1 2">Belongs to the thaumatin family.</text>
</comment>